<evidence type="ECO:0000255" key="1">
    <source>
        <dbReference type="HAMAP-Rule" id="MF_00053"/>
    </source>
</evidence>
<evidence type="ECO:0000255" key="2">
    <source>
        <dbReference type="PROSITE-ProRule" id="PRU01319"/>
    </source>
</evidence>
<name>RNH3_GEOSW</name>
<dbReference type="EC" id="3.1.26.4" evidence="1"/>
<dbReference type="EMBL" id="CP001638">
    <property type="protein sequence ID" value="ACS25330.1"/>
    <property type="molecule type" value="Genomic_DNA"/>
</dbReference>
<dbReference type="SMR" id="C5D5R2"/>
<dbReference type="STRING" id="471223.GWCH70_2636"/>
<dbReference type="KEGG" id="gwc:GWCH70_2636"/>
<dbReference type="eggNOG" id="COG1039">
    <property type="taxonomic scope" value="Bacteria"/>
</dbReference>
<dbReference type="HOGENOM" id="CLU_059546_1_0_9"/>
<dbReference type="OrthoDB" id="9777935at2"/>
<dbReference type="GO" id="GO:0005737">
    <property type="term" value="C:cytoplasm"/>
    <property type="evidence" value="ECO:0007669"/>
    <property type="project" value="UniProtKB-SubCell"/>
</dbReference>
<dbReference type="GO" id="GO:0032299">
    <property type="term" value="C:ribonuclease H2 complex"/>
    <property type="evidence" value="ECO:0007669"/>
    <property type="project" value="TreeGrafter"/>
</dbReference>
<dbReference type="GO" id="GO:0000287">
    <property type="term" value="F:magnesium ion binding"/>
    <property type="evidence" value="ECO:0007669"/>
    <property type="project" value="UniProtKB-UniRule"/>
</dbReference>
<dbReference type="GO" id="GO:0003723">
    <property type="term" value="F:RNA binding"/>
    <property type="evidence" value="ECO:0007669"/>
    <property type="project" value="InterPro"/>
</dbReference>
<dbReference type="GO" id="GO:0004523">
    <property type="term" value="F:RNA-DNA hybrid ribonuclease activity"/>
    <property type="evidence" value="ECO:0007669"/>
    <property type="project" value="UniProtKB-UniRule"/>
</dbReference>
<dbReference type="GO" id="GO:0043137">
    <property type="term" value="P:DNA replication, removal of RNA primer"/>
    <property type="evidence" value="ECO:0007669"/>
    <property type="project" value="TreeGrafter"/>
</dbReference>
<dbReference type="GO" id="GO:0006298">
    <property type="term" value="P:mismatch repair"/>
    <property type="evidence" value="ECO:0007669"/>
    <property type="project" value="TreeGrafter"/>
</dbReference>
<dbReference type="CDD" id="cd06590">
    <property type="entry name" value="RNase_HII_bacteria_HIII_like"/>
    <property type="match status" value="1"/>
</dbReference>
<dbReference type="CDD" id="cd14796">
    <property type="entry name" value="RNAse_HIII_N"/>
    <property type="match status" value="1"/>
</dbReference>
<dbReference type="FunFam" id="3.30.420.10:FF:000047">
    <property type="entry name" value="Ribonuclease HIII"/>
    <property type="match status" value="1"/>
</dbReference>
<dbReference type="Gene3D" id="3.30.420.10">
    <property type="entry name" value="Ribonuclease H-like superfamily/Ribonuclease H"/>
    <property type="match status" value="1"/>
</dbReference>
<dbReference type="Gene3D" id="3.30.310.10">
    <property type="entry name" value="TATA-Binding Protein"/>
    <property type="match status" value="1"/>
</dbReference>
<dbReference type="HAMAP" id="MF_00053">
    <property type="entry name" value="RNase_HIII"/>
    <property type="match status" value="1"/>
</dbReference>
<dbReference type="InterPro" id="IPR001352">
    <property type="entry name" value="RNase_HII/HIII"/>
</dbReference>
<dbReference type="InterPro" id="IPR024567">
    <property type="entry name" value="RNase_HII/HIII_dom"/>
</dbReference>
<dbReference type="InterPro" id="IPR004641">
    <property type="entry name" value="RNase_HIII"/>
</dbReference>
<dbReference type="InterPro" id="IPR024568">
    <property type="entry name" value="RNase_HIII_N"/>
</dbReference>
<dbReference type="InterPro" id="IPR012337">
    <property type="entry name" value="RNaseH-like_sf"/>
</dbReference>
<dbReference type="InterPro" id="IPR036397">
    <property type="entry name" value="RNaseH_sf"/>
</dbReference>
<dbReference type="InterPro" id="IPR012295">
    <property type="entry name" value="TBP_dom_sf"/>
</dbReference>
<dbReference type="NCBIfam" id="TIGR00716">
    <property type="entry name" value="rnhC"/>
    <property type="match status" value="1"/>
</dbReference>
<dbReference type="PANTHER" id="PTHR10954:SF23">
    <property type="entry name" value="RIBONUCLEASE"/>
    <property type="match status" value="1"/>
</dbReference>
<dbReference type="PANTHER" id="PTHR10954">
    <property type="entry name" value="RIBONUCLEASE H2 SUBUNIT A"/>
    <property type="match status" value="1"/>
</dbReference>
<dbReference type="Pfam" id="PF11858">
    <property type="entry name" value="DUF3378"/>
    <property type="match status" value="1"/>
</dbReference>
<dbReference type="Pfam" id="PF01351">
    <property type="entry name" value="RNase_HII"/>
    <property type="match status" value="1"/>
</dbReference>
<dbReference type="PIRSF" id="PIRSF037748">
    <property type="entry name" value="RnhC"/>
    <property type="match status" value="1"/>
</dbReference>
<dbReference type="SUPFAM" id="SSF53098">
    <property type="entry name" value="Ribonuclease H-like"/>
    <property type="match status" value="1"/>
</dbReference>
<dbReference type="PROSITE" id="PS51975">
    <property type="entry name" value="RNASE_H_2"/>
    <property type="match status" value="1"/>
</dbReference>
<organism>
    <name type="scientific">Geobacillus sp. (strain WCH70)</name>
    <dbReference type="NCBI Taxonomy" id="471223"/>
    <lineage>
        <taxon>Bacteria</taxon>
        <taxon>Bacillati</taxon>
        <taxon>Bacillota</taxon>
        <taxon>Bacilli</taxon>
        <taxon>Bacillales</taxon>
        <taxon>Anoxybacillaceae</taxon>
        <taxon>Geobacillus</taxon>
    </lineage>
</organism>
<keyword id="KW-0963">Cytoplasm</keyword>
<keyword id="KW-0255">Endonuclease</keyword>
<keyword id="KW-0378">Hydrolase</keyword>
<keyword id="KW-0460">Magnesium</keyword>
<keyword id="KW-0479">Metal-binding</keyword>
<keyword id="KW-0540">Nuclease</keyword>
<comment type="function">
    <text evidence="1">Endonuclease that specifically degrades the RNA of RNA-DNA hybrids.</text>
</comment>
<comment type="catalytic activity">
    <reaction evidence="1">
        <text>Endonucleolytic cleavage to 5'-phosphomonoester.</text>
        <dbReference type="EC" id="3.1.26.4"/>
    </reaction>
</comment>
<comment type="cofactor">
    <cofactor evidence="1">
        <name>Mn(2+)</name>
        <dbReference type="ChEBI" id="CHEBI:29035"/>
    </cofactor>
    <cofactor evidence="1">
        <name>Mg(2+)</name>
        <dbReference type="ChEBI" id="CHEBI:18420"/>
    </cofactor>
    <text evidence="1">Manganese or magnesium. Binds 1 divalent metal ion per monomer in the absence of substrate. May bind a second metal ion after substrate binding.</text>
</comment>
<comment type="subcellular location">
    <subcellularLocation>
        <location evidence="1">Cytoplasm</location>
    </subcellularLocation>
</comment>
<comment type="similarity">
    <text evidence="1">Belongs to the RNase HII family. RnhC subfamily.</text>
</comment>
<protein>
    <recommendedName>
        <fullName evidence="1">Ribonuclease HIII</fullName>
        <shortName evidence="1">RNase HIII</shortName>
        <ecNumber evidence="1">3.1.26.4</ecNumber>
    </recommendedName>
</protein>
<reference key="1">
    <citation type="submission" date="2009-06" db="EMBL/GenBank/DDBJ databases">
        <title>Complete sequence of chromosome of Geopacillus sp. WCH70.</title>
        <authorList>
            <consortium name="US DOE Joint Genome Institute"/>
            <person name="Lucas S."/>
            <person name="Copeland A."/>
            <person name="Lapidus A."/>
            <person name="Glavina del Rio T."/>
            <person name="Dalin E."/>
            <person name="Tice H."/>
            <person name="Bruce D."/>
            <person name="Goodwin L."/>
            <person name="Pitluck S."/>
            <person name="Chertkov O."/>
            <person name="Brettin T."/>
            <person name="Detter J.C."/>
            <person name="Han C."/>
            <person name="Larimer F."/>
            <person name="Land M."/>
            <person name="Hauser L."/>
            <person name="Kyrpides N."/>
            <person name="Mikhailova N."/>
            <person name="Brumm P."/>
            <person name="Mead D.A."/>
            <person name="Richardson P."/>
        </authorList>
    </citation>
    <scope>NUCLEOTIDE SEQUENCE [LARGE SCALE GENOMIC DNA]</scope>
    <source>
        <strain>WCH70</strain>
    </source>
</reference>
<proteinExistence type="inferred from homology"/>
<feature type="chain" id="PRO_1000202294" description="Ribonuclease HIII">
    <location>
        <begin position="1"/>
        <end position="301"/>
    </location>
</feature>
<feature type="domain" description="RNase H type-2" evidence="2">
    <location>
        <begin position="84"/>
        <end position="301"/>
    </location>
</feature>
<feature type="binding site" evidence="1">
    <location>
        <position position="90"/>
    </location>
    <ligand>
        <name>a divalent metal cation</name>
        <dbReference type="ChEBI" id="CHEBI:60240"/>
    </ligand>
</feature>
<feature type="binding site" evidence="1">
    <location>
        <position position="91"/>
    </location>
    <ligand>
        <name>a divalent metal cation</name>
        <dbReference type="ChEBI" id="CHEBI:60240"/>
    </ligand>
</feature>
<feature type="binding site" evidence="1">
    <location>
        <position position="195"/>
    </location>
    <ligand>
        <name>a divalent metal cation</name>
        <dbReference type="ChEBI" id="CHEBI:60240"/>
    </ligand>
</feature>
<gene>
    <name evidence="1" type="primary">rnhC</name>
    <name type="ordered locus">GWCH70_2636</name>
</gene>
<sequence length="301" mass="32982">MANHVITATATMLEEMRNHYASDITGHLPAGALFVAKRSGCTITAYRTGKVLFQGKEAEQEAAKWMKESDQKEAPVPQPPLAAASAIGSDEVGTGDYFGPVVVAAAYVAKDQMDAITAMGIKDSKLLTDEAIRRLAPSLMNMIPNQTVILSNPMYNDWQRSGMPQTKIKALLHNEAIGKLVKQLSPIEPEAIIIDQFIERDLYFRYLENETNVVRDHVYCYPKAETVHVAVAAASIIARYVFLQEMERLSKEVGMTLPKGAGAQVDQAAAKLIQTHGPAILEMCAKLHFANTEKAARIAKK</sequence>
<accession>C5D5R2</accession>